<gene>
    <name evidence="1" type="primary">hutG</name>
    <name type="ordered locus">RSc2645</name>
    <name type="ORF">RS04571</name>
</gene>
<feature type="chain" id="PRO_0000173763" description="Formimidoylglutamase">
    <location>
        <begin position="1"/>
        <end position="325"/>
    </location>
</feature>
<feature type="binding site" evidence="1">
    <location>
        <position position="125"/>
    </location>
    <ligand>
        <name>Mn(2+)</name>
        <dbReference type="ChEBI" id="CHEBI:29035"/>
        <label>1</label>
    </ligand>
</feature>
<feature type="binding site" evidence="1">
    <location>
        <position position="155"/>
    </location>
    <ligand>
        <name>Mn(2+)</name>
        <dbReference type="ChEBI" id="CHEBI:29035"/>
        <label>1</label>
    </ligand>
</feature>
<feature type="binding site" evidence="1">
    <location>
        <position position="155"/>
    </location>
    <ligand>
        <name>Mn(2+)</name>
        <dbReference type="ChEBI" id="CHEBI:29035"/>
        <label>2</label>
    </ligand>
</feature>
<feature type="binding site" evidence="1">
    <location>
        <position position="157"/>
    </location>
    <ligand>
        <name>Mn(2+)</name>
        <dbReference type="ChEBI" id="CHEBI:29035"/>
        <label>2</label>
    </ligand>
</feature>
<feature type="binding site" evidence="1">
    <location>
        <position position="159"/>
    </location>
    <ligand>
        <name>Mn(2+)</name>
        <dbReference type="ChEBI" id="CHEBI:29035"/>
        <label>1</label>
    </ligand>
</feature>
<feature type="binding site" evidence="1">
    <location>
        <position position="246"/>
    </location>
    <ligand>
        <name>Mn(2+)</name>
        <dbReference type="ChEBI" id="CHEBI:29035"/>
        <label>1</label>
    </ligand>
</feature>
<feature type="binding site" evidence="1">
    <location>
        <position position="246"/>
    </location>
    <ligand>
        <name>Mn(2+)</name>
        <dbReference type="ChEBI" id="CHEBI:29035"/>
        <label>2</label>
    </ligand>
</feature>
<feature type="binding site" evidence="1">
    <location>
        <position position="248"/>
    </location>
    <ligand>
        <name>Mn(2+)</name>
        <dbReference type="ChEBI" id="CHEBI:29035"/>
        <label>2</label>
    </ligand>
</feature>
<comment type="function">
    <text evidence="1">Catalyzes the conversion of N-formimidoyl-L-glutamate to L-glutamate and formamide.</text>
</comment>
<comment type="catalytic activity">
    <reaction evidence="1">
        <text>N-formimidoyl-L-glutamate + H2O = formamide + L-glutamate</text>
        <dbReference type="Rhea" id="RHEA:22492"/>
        <dbReference type="ChEBI" id="CHEBI:15377"/>
        <dbReference type="ChEBI" id="CHEBI:16397"/>
        <dbReference type="ChEBI" id="CHEBI:29985"/>
        <dbReference type="ChEBI" id="CHEBI:58928"/>
        <dbReference type="EC" id="3.5.3.8"/>
    </reaction>
</comment>
<comment type="cofactor">
    <cofactor evidence="1">
        <name>Mn(2+)</name>
        <dbReference type="ChEBI" id="CHEBI:29035"/>
    </cofactor>
    <text evidence="1">Binds 2 manganese ions per subunit.</text>
</comment>
<comment type="pathway">
    <text evidence="1">Amino-acid degradation; L-histidine degradation into L-glutamate; L-glutamate from N-formimidoyl-L-glutamate (hydrolase route): step 1/1.</text>
</comment>
<comment type="similarity">
    <text evidence="1">Belongs to the arginase family.</text>
</comment>
<accession>Q8XW30</accession>
<evidence type="ECO:0000255" key="1">
    <source>
        <dbReference type="HAMAP-Rule" id="MF_00737"/>
    </source>
</evidence>
<protein>
    <recommendedName>
        <fullName evidence="1">Formimidoylglutamase</fullName>
        <ecNumber evidence="1">3.5.3.8</ecNumber>
    </recommendedName>
    <alternativeName>
        <fullName evidence="1">Formiminoglutamase</fullName>
    </alternativeName>
    <alternativeName>
        <fullName evidence="1">Formiminoglutamate hydrolase</fullName>
    </alternativeName>
</protein>
<name>HUTG_RALN1</name>
<dbReference type="EC" id="3.5.3.8" evidence="1"/>
<dbReference type="EMBL" id="AL646052">
    <property type="protein sequence ID" value="CAD16352.1"/>
    <property type="molecule type" value="Genomic_DNA"/>
</dbReference>
<dbReference type="SMR" id="Q8XW30"/>
<dbReference type="STRING" id="267608.RSc2645"/>
<dbReference type="EnsemblBacteria" id="CAD16352">
    <property type="protein sequence ID" value="CAD16352"/>
    <property type="gene ID" value="RSc2645"/>
</dbReference>
<dbReference type="KEGG" id="rso:RSc2645"/>
<dbReference type="eggNOG" id="COG0010">
    <property type="taxonomic scope" value="Bacteria"/>
</dbReference>
<dbReference type="HOGENOM" id="CLU_039478_2_0_4"/>
<dbReference type="UniPathway" id="UPA00379">
    <property type="reaction ID" value="UER00552"/>
</dbReference>
<dbReference type="Proteomes" id="UP000001436">
    <property type="component" value="Chromosome"/>
</dbReference>
<dbReference type="GO" id="GO:0008783">
    <property type="term" value="F:agmatinase activity"/>
    <property type="evidence" value="ECO:0007669"/>
    <property type="project" value="TreeGrafter"/>
</dbReference>
<dbReference type="GO" id="GO:0050415">
    <property type="term" value="F:formimidoylglutamase activity"/>
    <property type="evidence" value="ECO:0007669"/>
    <property type="project" value="UniProtKB-UniRule"/>
</dbReference>
<dbReference type="GO" id="GO:0030145">
    <property type="term" value="F:manganese ion binding"/>
    <property type="evidence" value="ECO:0007669"/>
    <property type="project" value="UniProtKB-UniRule"/>
</dbReference>
<dbReference type="GO" id="GO:0019556">
    <property type="term" value="P:L-histidine catabolic process to glutamate and formamide"/>
    <property type="evidence" value="ECO:0007669"/>
    <property type="project" value="UniProtKB-UniPathway"/>
</dbReference>
<dbReference type="GO" id="GO:0019557">
    <property type="term" value="P:L-histidine catabolic process to glutamate and formate"/>
    <property type="evidence" value="ECO:0007669"/>
    <property type="project" value="UniProtKB-UniPathway"/>
</dbReference>
<dbReference type="GO" id="GO:0033389">
    <property type="term" value="P:putrescine biosynthetic process from arginine, via agmatine"/>
    <property type="evidence" value="ECO:0007669"/>
    <property type="project" value="TreeGrafter"/>
</dbReference>
<dbReference type="CDD" id="cd09988">
    <property type="entry name" value="Formimidoylglutamase"/>
    <property type="match status" value="1"/>
</dbReference>
<dbReference type="Gene3D" id="3.40.800.10">
    <property type="entry name" value="Ureohydrolase domain"/>
    <property type="match status" value="1"/>
</dbReference>
<dbReference type="HAMAP" id="MF_00737">
    <property type="entry name" value="Formimidoylglutam"/>
    <property type="match status" value="1"/>
</dbReference>
<dbReference type="InterPro" id="IPR005923">
    <property type="entry name" value="HutG"/>
</dbReference>
<dbReference type="InterPro" id="IPR006035">
    <property type="entry name" value="Ureohydrolase"/>
</dbReference>
<dbReference type="InterPro" id="IPR023696">
    <property type="entry name" value="Ureohydrolase_dom_sf"/>
</dbReference>
<dbReference type="NCBIfam" id="TIGR01227">
    <property type="entry name" value="hutG"/>
    <property type="match status" value="1"/>
</dbReference>
<dbReference type="PANTHER" id="PTHR11358">
    <property type="entry name" value="ARGINASE/AGMATINASE"/>
    <property type="match status" value="1"/>
</dbReference>
<dbReference type="PANTHER" id="PTHR11358:SF35">
    <property type="entry name" value="FORMIMIDOYLGLUTAMASE"/>
    <property type="match status" value="1"/>
</dbReference>
<dbReference type="Pfam" id="PF00491">
    <property type="entry name" value="Arginase"/>
    <property type="match status" value="1"/>
</dbReference>
<dbReference type="SUPFAM" id="SSF52768">
    <property type="entry name" value="Arginase/deacetylase"/>
    <property type="match status" value="1"/>
</dbReference>
<dbReference type="PROSITE" id="PS51409">
    <property type="entry name" value="ARGINASE_2"/>
    <property type="match status" value="1"/>
</dbReference>
<keyword id="KW-0369">Histidine metabolism</keyword>
<keyword id="KW-0378">Hydrolase</keyword>
<keyword id="KW-0464">Manganese</keyword>
<keyword id="KW-0479">Metal-binding</keyword>
<keyword id="KW-1185">Reference proteome</keyword>
<proteinExistence type="inferred from homology"/>
<organism>
    <name type="scientific">Ralstonia nicotianae (strain ATCC BAA-1114 / GMI1000)</name>
    <name type="common">Ralstonia solanacearum</name>
    <dbReference type="NCBI Taxonomy" id="267608"/>
    <lineage>
        <taxon>Bacteria</taxon>
        <taxon>Pseudomonadati</taxon>
        <taxon>Pseudomonadota</taxon>
        <taxon>Betaproteobacteria</taxon>
        <taxon>Burkholderiales</taxon>
        <taxon>Burkholderiaceae</taxon>
        <taxon>Ralstonia</taxon>
        <taxon>Ralstonia solanacearum species complex</taxon>
    </lineage>
</organism>
<sequence length="325" mass="34186">MHTEADPTVWQGRVDAEEGALGQRWHQVVRSADAASPLNGAVALAGFACDAGIARNHGRVGAQAGPAAIRRMLANLPARPGRAIVDAGDVTCRGDALEAAQDALSGVLHGLLDRGAFPIALGGGHELAWASFGGLARHLAARSAQPPRIGILNLDAHFDLRAGERGSSGTPFRQIAEDCARRGWPFRYACLGISAYANTEALFARARQLGVRWLRDDEMDLLHLPRVLQTVDAFLADVDHVYLTICLDVLPAGVAPGVSAPSARGVPMEVIEPIVDRVAASGKLRLADVAELNPSLDIDHRTARVAARLVARVVDGVAPQGAAHG</sequence>
<reference key="1">
    <citation type="journal article" date="2002" name="Nature">
        <title>Genome sequence of the plant pathogen Ralstonia solanacearum.</title>
        <authorList>
            <person name="Salanoubat M."/>
            <person name="Genin S."/>
            <person name="Artiguenave F."/>
            <person name="Gouzy J."/>
            <person name="Mangenot S."/>
            <person name="Arlat M."/>
            <person name="Billault A."/>
            <person name="Brottier P."/>
            <person name="Camus J.-C."/>
            <person name="Cattolico L."/>
            <person name="Chandler M."/>
            <person name="Choisne N."/>
            <person name="Claudel-Renard C."/>
            <person name="Cunnac S."/>
            <person name="Demange N."/>
            <person name="Gaspin C."/>
            <person name="Lavie M."/>
            <person name="Moisan A."/>
            <person name="Robert C."/>
            <person name="Saurin W."/>
            <person name="Schiex T."/>
            <person name="Siguier P."/>
            <person name="Thebault P."/>
            <person name="Whalen M."/>
            <person name="Wincker P."/>
            <person name="Levy M."/>
            <person name="Weissenbach J."/>
            <person name="Boucher C.A."/>
        </authorList>
    </citation>
    <scope>NUCLEOTIDE SEQUENCE [LARGE SCALE GENOMIC DNA]</scope>
    <source>
        <strain>ATCC BAA-1114 / GMI1000</strain>
    </source>
</reference>